<dbReference type="EMBL" id="CT573326">
    <property type="protein sequence ID" value="CAK13712.1"/>
    <property type="molecule type" value="Genomic_DNA"/>
</dbReference>
<dbReference type="RefSeq" id="WP_011532142.1">
    <property type="nucleotide sequence ID" value="NC_008027.1"/>
</dbReference>
<dbReference type="SMR" id="Q1IF42"/>
<dbReference type="STRING" id="384676.PSEEN0796"/>
<dbReference type="GeneID" id="32804104"/>
<dbReference type="KEGG" id="pen:PSEEN0796"/>
<dbReference type="eggNOG" id="COG0858">
    <property type="taxonomic scope" value="Bacteria"/>
</dbReference>
<dbReference type="HOGENOM" id="CLU_089475_5_0_6"/>
<dbReference type="OrthoDB" id="307788at2"/>
<dbReference type="Proteomes" id="UP000000658">
    <property type="component" value="Chromosome"/>
</dbReference>
<dbReference type="GO" id="GO:0005829">
    <property type="term" value="C:cytosol"/>
    <property type="evidence" value="ECO:0007669"/>
    <property type="project" value="TreeGrafter"/>
</dbReference>
<dbReference type="GO" id="GO:0043024">
    <property type="term" value="F:ribosomal small subunit binding"/>
    <property type="evidence" value="ECO:0007669"/>
    <property type="project" value="TreeGrafter"/>
</dbReference>
<dbReference type="GO" id="GO:0030490">
    <property type="term" value="P:maturation of SSU-rRNA"/>
    <property type="evidence" value="ECO:0007669"/>
    <property type="project" value="UniProtKB-UniRule"/>
</dbReference>
<dbReference type="Gene3D" id="3.30.300.20">
    <property type="match status" value="1"/>
</dbReference>
<dbReference type="HAMAP" id="MF_00003">
    <property type="entry name" value="RbfA"/>
    <property type="match status" value="1"/>
</dbReference>
<dbReference type="InterPro" id="IPR015946">
    <property type="entry name" value="KH_dom-like_a/b"/>
</dbReference>
<dbReference type="InterPro" id="IPR000238">
    <property type="entry name" value="RbfA"/>
</dbReference>
<dbReference type="InterPro" id="IPR023799">
    <property type="entry name" value="RbfA_dom_sf"/>
</dbReference>
<dbReference type="InterPro" id="IPR020053">
    <property type="entry name" value="Ribosome-bd_factorA_CS"/>
</dbReference>
<dbReference type="NCBIfam" id="TIGR00082">
    <property type="entry name" value="rbfA"/>
    <property type="match status" value="1"/>
</dbReference>
<dbReference type="PANTHER" id="PTHR33515">
    <property type="entry name" value="RIBOSOME-BINDING FACTOR A, CHLOROPLASTIC-RELATED"/>
    <property type="match status" value="1"/>
</dbReference>
<dbReference type="PANTHER" id="PTHR33515:SF1">
    <property type="entry name" value="RIBOSOME-BINDING FACTOR A, CHLOROPLASTIC-RELATED"/>
    <property type="match status" value="1"/>
</dbReference>
<dbReference type="Pfam" id="PF02033">
    <property type="entry name" value="RBFA"/>
    <property type="match status" value="1"/>
</dbReference>
<dbReference type="SUPFAM" id="SSF89919">
    <property type="entry name" value="Ribosome-binding factor A, RbfA"/>
    <property type="match status" value="1"/>
</dbReference>
<dbReference type="PROSITE" id="PS01319">
    <property type="entry name" value="RBFA"/>
    <property type="match status" value="1"/>
</dbReference>
<accession>Q1IF42</accession>
<reference key="1">
    <citation type="journal article" date="2006" name="Nat. Biotechnol.">
        <title>Complete genome sequence of the entomopathogenic and metabolically versatile soil bacterium Pseudomonas entomophila.</title>
        <authorList>
            <person name="Vodovar N."/>
            <person name="Vallenet D."/>
            <person name="Cruveiller S."/>
            <person name="Rouy Z."/>
            <person name="Barbe V."/>
            <person name="Acosta C."/>
            <person name="Cattolico L."/>
            <person name="Jubin C."/>
            <person name="Lajus A."/>
            <person name="Segurens B."/>
            <person name="Vacherie B."/>
            <person name="Wincker P."/>
            <person name="Weissenbach J."/>
            <person name="Lemaitre B."/>
            <person name="Medigue C."/>
            <person name="Boccard F."/>
        </authorList>
    </citation>
    <scope>NUCLEOTIDE SEQUENCE [LARGE SCALE GENOMIC DNA]</scope>
    <source>
        <strain>L48</strain>
    </source>
</reference>
<name>RBFA_PSEE4</name>
<proteinExistence type="inferred from homology"/>
<gene>
    <name evidence="1" type="primary">rbfA</name>
    <name type="ordered locus">PSEEN0796</name>
</gene>
<protein>
    <recommendedName>
        <fullName evidence="1">Ribosome-binding factor A</fullName>
    </recommendedName>
</protein>
<sequence>MAKEYSRTQRIGDQMQRELAELIRREVKDPRVGLVTITAVDVSRDLGHAKVFITVMGQDGTDAVPQTLKALTSAASFLRLHLGRVMQLRSVPQLHFHFDESVSRGVHLSALIERAVAEDRLHQDAGEPDTKE</sequence>
<feature type="chain" id="PRO_1000000175" description="Ribosome-binding factor A">
    <location>
        <begin position="1"/>
        <end position="132"/>
    </location>
</feature>
<organism>
    <name type="scientific">Pseudomonas entomophila (strain L48)</name>
    <dbReference type="NCBI Taxonomy" id="384676"/>
    <lineage>
        <taxon>Bacteria</taxon>
        <taxon>Pseudomonadati</taxon>
        <taxon>Pseudomonadota</taxon>
        <taxon>Gammaproteobacteria</taxon>
        <taxon>Pseudomonadales</taxon>
        <taxon>Pseudomonadaceae</taxon>
        <taxon>Pseudomonas</taxon>
    </lineage>
</organism>
<keyword id="KW-0963">Cytoplasm</keyword>
<keyword id="KW-0690">Ribosome biogenesis</keyword>
<comment type="function">
    <text evidence="1">One of several proteins that assist in the late maturation steps of the functional core of the 30S ribosomal subunit. Associates with free 30S ribosomal subunits (but not with 30S subunits that are part of 70S ribosomes or polysomes). Required for efficient processing of 16S rRNA. May interact with the 5'-terminal helix region of 16S rRNA.</text>
</comment>
<comment type="subunit">
    <text evidence="1">Monomer. Binds 30S ribosomal subunits, but not 50S ribosomal subunits or 70S ribosomes.</text>
</comment>
<comment type="subcellular location">
    <subcellularLocation>
        <location evidence="1">Cytoplasm</location>
    </subcellularLocation>
</comment>
<comment type="similarity">
    <text evidence="1">Belongs to the RbfA family.</text>
</comment>
<evidence type="ECO:0000255" key="1">
    <source>
        <dbReference type="HAMAP-Rule" id="MF_00003"/>
    </source>
</evidence>